<evidence type="ECO:0000250" key="1"/>
<evidence type="ECO:0000250" key="2">
    <source>
        <dbReference type="UniProtKB" id="O08815"/>
    </source>
</evidence>
<evidence type="ECO:0000250" key="3">
    <source>
        <dbReference type="UniProtKB" id="O54988"/>
    </source>
</evidence>
<evidence type="ECO:0000255" key="4"/>
<evidence type="ECO:0000255" key="5">
    <source>
        <dbReference type="PROSITE-ProRule" id="PRU00159"/>
    </source>
</evidence>
<evidence type="ECO:0000255" key="6">
    <source>
        <dbReference type="PROSITE-ProRule" id="PRU00217"/>
    </source>
</evidence>
<evidence type="ECO:0000255" key="7">
    <source>
        <dbReference type="PROSITE-ProRule" id="PRU10027"/>
    </source>
</evidence>
<evidence type="ECO:0000256" key="8">
    <source>
        <dbReference type="SAM" id="MobiDB-lite"/>
    </source>
</evidence>
<evidence type="ECO:0000269" key="9">
    <source>
    </source>
</evidence>
<evidence type="ECO:0000269" key="10">
    <source>
    </source>
</evidence>
<evidence type="ECO:0000269" key="11">
    <source>
    </source>
</evidence>
<evidence type="ECO:0000303" key="12">
    <source>
    </source>
</evidence>
<evidence type="ECO:0000303" key="13">
    <source>
    </source>
</evidence>
<evidence type="ECO:0000303" key="14">
    <source>
    </source>
</evidence>
<evidence type="ECO:0000305" key="15"/>
<evidence type="ECO:0007744" key="16">
    <source>
    </source>
</evidence>
<evidence type="ECO:0007744" key="17">
    <source>
    </source>
</evidence>
<evidence type="ECO:0007744" key="18">
    <source>
    </source>
</evidence>
<evidence type="ECO:0007744" key="19">
    <source>
    </source>
</evidence>
<evidence type="ECO:0007744" key="20">
    <source>
    </source>
</evidence>
<evidence type="ECO:0007744" key="21">
    <source>
    </source>
</evidence>
<evidence type="ECO:0007744" key="22">
    <source>
    </source>
</evidence>
<evidence type="ECO:0007744" key="23">
    <source>
    </source>
</evidence>
<evidence type="ECO:0007829" key="24">
    <source>
        <dbReference type="PDB" id="2J51"/>
    </source>
</evidence>
<evidence type="ECO:0007829" key="25">
    <source>
        <dbReference type="PDB" id="6HVD"/>
    </source>
</evidence>
<keyword id="KW-0002">3D-structure</keyword>
<keyword id="KW-0025">Alternative splicing</keyword>
<keyword id="KW-0053">Apoptosis</keyword>
<keyword id="KW-0067">ATP-binding</keyword>
<keyword id="KW-0175">Coiled coil</keyword>
<keyword id="KW-0963">Cytoplasm</keyword>
<keyword id="KW-0418">Kinase</keyword>
<keyword id="KW-0547">Nucleotide-binding</keyword>
<keyword id="KW-0597">Phosphoprotein</keyword>
<keyword id="KW-1267">Proteomics identification</keyword>
<keyword id="KW-1185">Reference proteome</keyword>
<keyword id="KW-0723">Serine/threonine-protein kinase</keyword>
<keyword id="KW-0808">Transferase</keyword>
<name>SLK_HUMAN</name>
<feature type="chain" id="PRO_0000233239" description="STE20-like serine/threonine-protein kinase">
    <location>
        <begin position="1"/>
        <end position="1235"/>
    </location>
</feature>
<feature type="domain" description="Protein kinase" evidence="5">
    <location>
        <begin position="34"/>
        <end position="292"/>
    </location>
</feature>
<feature type="domain" description="UVR" evidence="6">
    <location>
        <begin position="875"/>
        <end position="910"/>
    </location>
</feature>
<feature type="region of interest" description="Disordered" evidence="8">
    <location>
        <begin position="309"/>
        <end position="351"/>
    </location>
</feature>
<feature type="region of interest" description="Disordered" evidence="8">
    <location>
        <begin position="363"/>
        <end position="393"/>
    </location>
</feature>
<feature type="region of interest" description="Disordered" evidence="8">
    <location>
        <begin position="421"/>
        <end position="441"/>
    </location>
</feature>
<feature type="region of interest" description="Disordered" evidence="8">
    <location>
        <begin position="519"/>
        <end position="539"/>
    </location>
</feature>
<feature type="region of interest" description="Disordered" evidence="8">
    <location>
        <begin position="613"/>
        <end position="760"/>
    </location>
</feature>
<feature type="coiled-coil region" evidence="4">
    <location>
        <begin position="826"/>
        <end position="1069"/>
    </location>
</feature>
<feature type="coiled-coil region" evidence="4">
    <location>
        <begin position="1109"/>
        <end position="1183"/>
    </location>
</feature>
<feature type="compositionally biased region" description="Acidic residues" evidence="8">
    <location>
        <begin position="312"/>
        <end position="328"/>
    </location>
</feature>
<feature type="compositionally biased region" description="Basic and acidic residues" evidence="8">
    <location>
        <begin position="421"/>
        <end position="432"/>
    </location>
</feature>
<feature type="compositionally biased region" description="Basic and acidic residues" evidence="8">
    <location>
        <begin position="522"/>
        <end position="539"/>
    </location>
</feature>
<feature type="compositionally biased region" description="Acidic residues" evidence="8">
    <location>
        <begin position="638"/>
        <end position="650"/>
    </location>
</feature>
<feature type="compositionally biased region" description="Basic and acidic residues" evidence="8">
    <location>
        <begin position="679"/>
        <end position="695"/>
    </location>
</feature>
<feature type="compositionally biased region" description="Low complexity" evidence="8">
    <location>
        <begin position="749"/>
        <end position="760"/>
    </location>
</feature>
<feature type="active site" description="Proton acceptor" evidence="5 7">
    <location>
        <position position="155"/>
    </location>
</feature>
<feature type="binding site" evidence="5">
    <location>
        <begin position="40"/>
        <end position="48"/>
    </location>
    <ligand>
        <name>ATP</name>
        <dbReference type="ChEBI" id="CHEBI:30616"/>
    </ligand>
</feature>
<feature type="binding site" evidence="5">
    <location>
        <position position="63"/>
    </location>
    <ligand>
        <name>ATP</name>
        <dbReference type="ChEBI" id="CHEBI:30616"/>
    </ligand>
</feature>
<feature type="site" description="Cleavage; by caspase-3" evidence="1">
    <location>
        <begin position="438"/>
        <end position="439"/>
    </location>
</feature>
<feature type="modified residue" description="Phosphoserine" evidence="21 22">
    <location>
        <position position="14"/>
    </location>
</feature>
<feature type="modified residue" description="Phosphothreonine" evidence="3">
    <location>
        <position position="183"/>
    </location>
</feature>
<feature type="modified residue" description="Phosphoserine" evidence="16 17 18 20 22">
    <location>
        <position position="189"/>
    </location>
</feature>
<feature type="modified residue" description="Phosphoserine" evidence="17">
    <location>
        <position position="330"/>
    </location>
</feature>
<feature type="modified residue" description="Phosphoserine" evidence="2">
    <location>
        <position position="340"/>
    </location>
</feature>
<feature type="modified residue" description="Phosphoserine" evidence="22">
    <location>
        <position position="341"/>
    </location>
</feature>
<feature type="modified residue" description="Phosphoserine" evidence="18">
    <location>
        <position position="344"/>
    </location>
</feature>
<feature type="modified residue" description="Phosphoserine" evidence="16 21">
    <location>
        <position position="347"/>
    </location>
</feature>
<feature type="modified residue" description="Phosphoserine" evidence="16 21">
    <location>
        <position position="348"/>
    </location>
</feature>
<feature type="modified residue" description="Phosphoserine" evidence="3">
    <location>
        <position position="354"/>
    </location>
</feature>
<feature type="modified residue" description="Phosphoserine" evidence="23">
    <location>
        <position position="372"/>
    </location>
</feature>
<feature type="modified residue" description="Phosphoserine" evidence="22 23">
    <location>
        <position position="518"/>
    </location>
</feature>
<feature type="modified residue" description="Phosphoserine" evidence="17 18 21 22 23">
    <location>
        <position position="565"/>
    </location>
</feature>
<feature type="modified residue" description="Phosphothreonine" evidence="23">
    <location>
        <position position="569"/>
    </location>
</feature>
<feature type="modified residue" description="Phosphoserine" evidence="16 20 21 22 23">
    <location>
        <position position="571"/>
    </location>
</feature>
<feature type="modified residue" description="Phosphoserine" evidence="3">
    <location>
        <position position="647"/>
    </location>
</feature>
<feature type="modified residue" description="Phosphoserine" evidence="17">
    <location>
        <position position="655"/>
    </location>
</feature>
<feature type="modified residue" description="Phosphoserine" evidence="3">
    <location>
        <position position="667"/>
    </location>
</feature>
<feature type="modified residue" description="Phosphoserine" evidence="16">
    <location>
        <position position="777"/>
    </location>
</feature>
<feature type="modified residue" description="Phosphoserine" evidence="16 19 20 22">
    <location>
        <position position="779"/>
    </location>
</feature>
<feature type="modified residue" description="Phosphothreonine" evidence="22">
    <location>
        <position position="814"/>
    </location>
</feature>
<feature type="modified residue" description="Phosphoserine" evidence="16 22">
    <location>
        <position position="818"/>
    </location>
</feature>
<feature type="modified residue" description="Phosphothreonine" evidence="20">
    <location>
        <position position="1097"/>
    </location>
</feature>
<feature type="splice variant" id="VSP_018100" description="In isoform 2." evidence="12 13 14">
    <location>
        <begin position="929"/>
        <end position="959"/>
    </location>
</feature>
<feature type="sequence variant" id="VAR_041080" description="In a lung adenocarcinoma sample; somatic mutation." evidence="10">
    <original>Q</original>
    <variation>K</variation>
    <location>
        <position position="405"/>
    </location>
</feature>
<feature type="sequence variant" id="VAR_084656" description="Found in a patient with global developmental delay; uncertain significance." evidence="11">
    <location>
        <begin position="472"/>
        <end position="1235"/>
    </location>
</feature>
<feature type="sequence variant" id="VAR_041081" description="In dbSNP:rs805657." evidence="10">
    <original>C</original>
    <variation>Y</variation>
    <location>
        <position position="552"/>
    </location>
</feature>
<feature type="sequence variant" id="VAR_041082" description="In an ovarian serous carcinoma sample; somatic mutation; dbSNP:rs190220654." evidence="10">
    <original>E</original>
    <variation>Q</variation>
    <location>
        <position position="604"/>
    </location>
</feature>
<feature type="sequence variant" id="VAR_041083" description="In dbSNP:rs56400929." evidence="10">
    <original>A</original>
    <variation>G</variation>
    <location>
        <position position="658"/>
    </location>
</feature>
<feature type="sequence variant" id="VAR_051666" description="In dbSNP:rs7071400.">
    <original>G</original>
    <variation>E</variation>
    <location>
        <position position="666"/>
    </location>
</feature>
<feature type="sequence variant" id="VAR_041084" description="In dbSNP:rs34326537." evidence="10">
    <original>I</original>
    <variation>T</variation>
    <location>
        <position position="679"/>
    </location>
</feature>
<feature type="sequence variant" id="VAR_041085" description="In dbSNP:rs35389916." evidence="10">
    <original>K</original>
    <variation>N</variation>
    <location>
        <position position="683"/>
    </location>
</feature>
<feature type="sequence variant" id="VAR_041086" description="In dbSNP:rs3740469." evidence="10">
    <original>T</original>
    <variation>I</variation>
    <location>
        <position position="697"/>
    </location>
</feature>
<feature type="mutagenesis site" description="Loss of activity." evidence="9">
    <original>K</original>
    <variation>R</variation>
    <location>
        <position position="63"/>
    </location>
</feature>
<feature type="sequence conflict" description="In Ref. 3; BAA13195." evidence="15" ref="3">
    <original>N</original>
    <variation>S</variation>
    <location>
        <position position="5"/>
    </location>
</feature>
<feature type="strand" evidence="25">
    <location>
        <begin position="25"/>
        <end position="28"/>
    </location>
</feature>
<feature type="helix" evidence="25">
    <location>
        <begin position="30"/>
        <end position="32"/>
    </location>
</feature>
<feature type="strand" evidence="25">
    <location>
        <begin position="34"/>
        <end position="41"/>
    </location>
</feature>
<feature type="strand" evidence="25">
    <location>
        <begin position="48"/>
        <end position="53"/>
    </location>
</feature>
<feature type="turn" evidence="25">
    <location>
        <begin position="54"/>
        <end position="56"/>
    </location>
</feature>
<feature type="strand" evidence="25">
    <location>
        <begin position="59"/>
        <end position="66"/>
    </location>
</feature>
<feature type="helix" evidence="25">
    <location>
        <begin position="70"/>
        <end position="85"/>
    </location>
</feature>
<feature type="strand" evidence="25">
    <location>
        <begin position="94"/>
        <end position="100"/>
    </location>
</feature>
<feature type="strand" evidence="25">
    <location>
        <begin position="103"/>
        <end position="109"/>
    </location>
</feature>
<feature type="helix" evidence="25">
    <location>
        <begin position="116"/>
        <end position="123"/>
    </location>
</feature>
<feature type="helix" evidence="25">
    <location>
        <begin position="129"/>
        <end position="148"/>
    </location>
</feature>
<feature type="helix" evidence="25">
    <location>
        <begin position="158"/>
        <end position="160"/>
    </location>
</feature>
<feature type="strand" evidence="25">
    <location>
        <begin position="161"/>
        <end position="163"/>
    </location>
</feature>
<feature type="strand" evidence="25">
    <location>
        <begin position="169"/>
        <end position="171"/>
    </location>
</feature>
<feature type="helix" evidence="24">
    <location>
        <begin position="181"/>
        <end position="187"/>
    </location>
</feature>
<feature type="helix" evidence="25">
    <location>
        <begin position="199"/>
        <end position="202"/>
    </location>
</feature>
<feature type="helix" evidence="25">
    <location>
        <begin position="207"/>
        <end position="209"/>
    </location>
</feature>
<feature type="helix" evidence="25">
    <location>
        <begin position="212"/>
        <end position="214"/>
    </location>
</feature>
<feature type="helix" evidence="25">
    <location>
        <begin position="215"/>
        <end position="230"/>
    </location>
</feature>
<feature type="turn" evidence="25">
    <location>
        <begin position="234"/>
        <end position="237"/>
    </location>
</feature>
<feature type="helix" evidence="25">
    <location>
        <begin position="240"/>
        <end position="249"/>
    </location>
</feature>
<feature type="helix" evidence="25">
    <location>
        <begin position="258"/>
        <end position="260"/>
    </location>
</feature>
<feature type="helix" evidence="25">
    <location>
        <begin position="263"/>
        <end position="272"/>
    </location>
</feature>
<feature type="turn" evidence="25">
    <location>
        <begin position="277"/>
        <end position="279"/>
    </location>
</feature>
<feature type="helix" evidence="25">
    <location>
        <begin position="283"/>
        <end position="286"/>
    </location>
</feature>
<feature type="helix" evidence="25">
    <location>
        <begin position="290"/>
        <end position="292"/>
    </location>
</feature>
<feature type="helix" evidence="25">
    <location>
        <begin position="298"/>
        <end position="308"/>
    </location>
</feature>
<protein>
    <recommendedName>
        <fullName>STE20-like serine/threonine-protein kinase</fullName>
        <shortName>STE20-like kinase</shortName>
        <shortName>hSLK</shortName>
        <ecNumber>2.7.11.1</ecNumber>
    </recommendedName>
    <alternativeName>
        <fullName>CTCL tumor antigen se20-9</fullName>
    </alternativeName>
    <alternativeName>
        <fullName>STE20-related serine/threonine-protein kinase</fullName>
        <shortName>STE20-related kinase</shortName>
    </alternativeName>
    <alternativeName>
        <fullName>Serine/threonine-protein kinase 2</fullName>
    </alternativeName>
</protein>
<proteinExistence type="evidence at protein level"/>
<reference key="1">
    <citation type="journal article" date="2000" name="Biochim. Biophys. Acta">
        <title>Molecular cloning and characterization of a novel human STE20-like kinase, hSLK.</title>
        <authorList>
            <person name="Yamada E."/>
            <person name="Tsujikawa K."/>
            <person name="Itoh S."/>
            <person name="Kameda Y."/>
            <person name="Kohama Y."/>
            <person name="Yamamoto H."/>
        </authorList>
    </citation>
    <scope>NUCLEOTIDE SEQUENCE [MRNA] (ISOFORM 2)</scope>
    <scope>TISSUE SPECIFICITY</scope>
    <scope>PHOSPHORYLATION</scope>
    <scope>MUTAGENESIS OF LYS-63</scope>
    <source>
        <tissue>Lung carcinoma</tissue>
    </source>
</reference>
<reference key="2">
    <citation type="journal article" date="2001" name="Proc. Natl. Acad. Sci. U.S.A.">
        <title>Serological detection of cutaneous T-cell lymphoma-associated antigens.</title>
        <authorList>
            <person name="Eichmueller S."/>
            <person name="Usener D."/>
            <person name="Dummer R."/>
            <person name="Stein A."/>
            <person name="Thiel D."/>
            <person name="Schadendorf D."/>
        </authorList>
    </citation>
    <scope>NUCLEOTIDE SEQUENCE [MRNA] (ISOFORM 1)</scope>
    <source>
        <tissue>Testis</tissue>
    </source>
</reference>
<reference key="3">
    <citation type="journal article" date="1996" name="DNA Res.">
        <title>Prediction of the coding sequences of unidentified human genes. VI. The coding sequences of 80 new genes (KIAA0201-KIAA0280) deduced by analysis of cDNA clones from cell line KG-1 and brain.</title>
        <authorList>
            <person name="Nagase T."/>
            <person name="Seki N."/>
            <person name="Ishikawa K."/>
            <person name="Ohira M."/>
            <person name="Kawarabayasi Y."/>
            <person name="Ohara O."/>
            <person name="Tanaka A."/>
            <person name="Kotani H."/>
            <person name="Miyajima N."/>
            <person name="Nomura N."/>
        </authorList>
    </citation>
    <scope>NUCLEOTIDE SEQUENCE [LARGE SCALE MRNA] (ISOFORM 2)</scope>
    <source>
        <tissue>Bone marrow</tissue>
    </source>
</reference>
<reference key="4">
    <citation type="submission" date="1996-08" db="EMBL/GenBank/DDBJ databases">
        <authorList>
            <person name="Ohara O."/>
            <person name="Nagase T."/>
            <person name="Kikuno R."/>
            <person name="Nomura N."/>
        </authorList>
    </citation>
    <scope>SEQUENCE REVISION</scope>
</reference>
<reference key="5">
    <citation type="journal article" date="2004" name="Nature">
        <title>The DNA sequence and comparative analysis of human chromosome 10.</title>
        <authorList>
            <person name="Deloukas P."/>
            <person name="Earthrowl M.E."/>
            <person name="Grafham D.V."/>
            <person name="Rubenfield M."/>
            <person name="French L."/>
            <person name="Steward C.A."/>
            <person name="Sims S.K."/>
            <person name="Jones M.C."/>
            <person name="Searle S."/>
            <person name="Scott C."/>
            <person name="Howe K."/>
            <person name="Hunt S.E."/>
            <person name="Andrews T.D."/>
            <person name="Gilbert J.G.R."/>
            <person name="Swarbreck D."/>
            <person name="Ashurst J.L."/>
            <person name="Taylor A."/>
            <person name="Battles J."/>
            <person name="Bird C.P."/>
            <person name="Ainscough R."/>
            <person name="Almeida J.P."/>
            <person name="Ashwell R.I.S."/>
            <person name="Ambrose K.D."/>
            <person name="Babbage A.K."/>
            <person name="Bagguley C.L."/>
            <person name="Bailey J."/>
            <person name="Banerjee R."/>
            <person name="Bates K."/>
            <person name="Beasley H."/>
            <person name="Bray-Allen S."/>
            <person name="Brown A.J."/>
            <person name="Brown J.Y."/>
            <person name="Burford D.C."/>
            <person name="Burrill W."/>
            <person name="Burton J."/>
            <person name="Cahill P."/>
            <person name="Camire D."/>
            <person name="Carter N.P."/>
            <person name="Chapman J.C."/>
            <person name="Clark S.Y."/>
            <person name="Clarke G."/>
            <person name="Clee C.M."/>
            <person name="Clegg S."/>
            <person name="Corby N."/>
            <person name="Coulson A."/>
            <person name="Dhami P."/>
            <person name="Dutta I."/>
            <person name="Dunn M."/>
            <person name="Faulkner L."/>
            <person name="Frankish A."/>
            <person name="Frankland J.A."/>
            <person name="Garner P."/>
            <person name="Garnett J."/>
            <person name="Gribble S."/>
            <person name="Griffiths C."/>
            <person name="Grocock R."/>
            <person name="Gustafson E."/>
            <person name="Hammond S."/>
            <person name="Harley J.L."/>
            <person name="Hart E."/>
            <person name="Heath P.D."/>
            <person name="Ho T.P."/>
            <person name="Hopkins B."/>
            <person name="Horne J."/>
            <person name="Howden P.J."/>
            <person name="Huckle E."/>
            <person name="Hynds C."/>
            <person name="Johnson C."/>
            <person name="Johnson D."/>
            <person name="Kana A."/>
            <person name="Kay M."/>
            <person name="Kimberley A.M."/>
            <person name="Kershaw J.K."/>
            <person name="Kokkinaki M."/>
            <person name="Laird G.K."/>
            <person name="Lawlor S."/>
            <person name="Lee H.M."/>
            <person name="Leongamornlert D.A."/>
            <person name="Laird G."/>
            <person name="Lloyd C."/>
            <person name="Lloyd D.M."/>
            <person name="Loveland J."/>
            <person name="Lovell J."/>
            <person name="McLaren S."/>
            <person name="McLay K.E."/>
            <person name="McMurray A."/>
            <person name="Mashreghi-Mohammadi M."/>
            <person name="Matthews L."/>
            <person name="Milne S."/>
            <person name="Nickerson T."/>
            <person name="Nguyen M."/>
            <person name="Overton-Larty E."/>
            <person name="Palmer S.A."/>
            <person name="Pearce A.V."/>
            <person name="Peck A.I."/>
            <person name="Pelan S."/>
            <person name="Phillimore B."/>
            <person name="Porter K."/>
            <person name="Rice C.M."/>
            <person name="Rogosin A."/>
            <person name="Ross M.T."/>
            <person name="Sarafidou T."/>
            <person name="Sehra H.K."/>
            <person name="Shownkeen R."/>
            <person name="Skuce C.D."/>
            <person name="Smith M."/>
            <person name="Standring L."/>
            <person name="Sycamore N."/>
            <person name="Tester J."/>
            <person name="Thorpe A."/>
            <person name="Torcasso W."/>
            <person name="Tracey A."/>
            <person name="Tromans A."/>
            <person name="Tsolas J."/>
            <person name="Wall M."/>
            <person name="Walsh J."/>
            <person name="Wang H."/>
            <person name="Weinstock K."/>
            <person name="West A.P."/>
            <person name="Willey D.L."/>
            <person name="Whitehead S.L."/>
            <person name="Wilming L."/>
            <person name="Wray P.W."/>
            <person name="Young L."/>
            <person name="Chen Y."/>
            <person name="Lovering R.C."/>
            <person name="Moschonas N.K."/>
            <person name="Siebert R."/>
            <person name="Fechtel K."/>
            <person name="Bentley D."/>
            <person name="Durbin R.M."/>
            <person name="Hubbard T."/>
            <person name="Doucette-Stamm L."/>
            <person name="Beck S."/>
            <person name="Smith D.R."/>
            <person name="Rogers J."/>
        </authorList>
    </citation>
    <scope>NUCLEOTIDE SEQUENCE [LARGE SCALE GENOMIC DNA]</scope>
</reference>
<reference key="6">
    <citation type="submission" date="2005-09" db="EMBL/GenBank/DDBJ databases">
        <authorList>
            <person name="Mural R.J."/>
            <person name="Istrail S."/>
            <person name="Sutton G.G."/>
            <person name="Florea L."/>
            <person name="Halpern A.L."/>
            <person name="Mobarry C.M."/>
            <person name="Lippert R."/>
            <person name="Walenz B."/>
            <person name="Shatkay H."/>
            <person name="Dew I."/>
            <person name="Miller J.R."/>
            <person name="Flanigan M.J."/>
            <person name="Edwards N.J."/>
            <person name="Bolanos R."/>
            <person name="Fasulo D."/>
            <person name="Halldorsson B.V."/>
            <person name="Hannenhalli S."/>
            <person name="Turner R."/>
            <person name="Yooseph S."/>
            <person name="Lu F."/>
            <person name="Nusskern D.R."/>
            <person name="Shue B.C."/>
            <person name="Zheng X.H."/>
            <person name="Zhong F."/>
            <person name="Delcher A.L."/>
            <person name="Huson D.H."/>
            <person name="Kravitz S.A."/>
            <person name="Mouchard L."/>
            <person name="Reinert K."/>
            <person name="Remington K.A."/>
            <person name="Clark A.G."/>
            <person name="Waterman M.S."/>
            <person name="Eichler E.E."/>
            <person name="Adams M.D."/>
            <person name="Hunkapiller M.W."/>
            <person name="Myers E.W."/>
            <person name="Venter J.C."/>
        </authorList>
    </citation>
    <scope>NUCLEOTIDE SEQUENCE [LARGE SCALE GENOMIC DNA]</scope>
</reference>
<reference key="7">
    <citation type="journal article" date="2004" name="Genome Res.">
        <title>The status, quality, and expansion of the NIH full-length cDNA project: the Mammalian Gene Collection (MGC).</title>
        <authorList>
            <consortium name="The MGC Project Team"/>
        </authorList>
    </citation>
    <scope>NUCLEOTIDE SEQUENCE [LARGE SCALE MRNA] (ISOFORM 2)</scope>
    <source>
        <tissue>Testis</tissue>
        <tissue>Uterus</tissue>
    </source>
</reference>
<reference key="8">
    <citation type="journal article" date="2008" name="Mol. Cell">
        <title>Kinase-selective enrichment enables quantitative phosphoproteomics of the kinome across the cell cycle.</title>
        <authorList>
            <person name="Daub H."/>
            <person name="Olsen J.V."/>
            <person name="Bairlein M."/>
            <person name="Gnad F."/>
            <person name="Oppermann F.S."/>
            <person name="Korner R."/>
            <person name="Greff Z."/>
            <person name="Keri G."/>
            <person name="Stemmann O."/>
            <person name="Mann M."/>
        </authorList>
    </citation>
    <scope>PHOSPHORYLATION [LARGE SCALE ANALYSIS] AT SER-189; SER-330; SER-565 AND SER-655</scope>
    <scope>IDENTIFICATION BY MASS SPECTROMETRY [LARGE SCALE ANALYSIS]</scope>
    <source>
        <tissue>Cervix carcinoma</tissue>
    </source>
</reference>
<reference key="9">
    <citation type="journal article" date="2008" name="Proc. Natl. Acad. Sci. U.S.A.">
        <title>A quantitative atlas of mitotic phosphorylation.</title>
        <authorList>
            <person name="Dephoure N."/>
            <person name="Zhou C."/>
            <person name="Villen J."/>
            <person name="Beausoleil S.A."/>
            <person name="Bakalarski C.E."/>
            <person name="Elledge S.J."/>
            <person name="Gygi S.P."/>
        </authorList>
    </citation>
    <scope>PHOSPHORYLATION [LARGE SCALE ANALYSIS] AT SER-189; SER-347; SER-348; SER-571; SER-777; SER-779 AND SER-818</scope>
    <scope>IDENTIFICATION BY MASS SPECTROMETRY [LARGE SCALE ANALYSIS]</scope>
    <source>
        <tissue>Cervix carcinoma</tissue>
    </source>
</reference>
<reference key="10">
    <citation type="journal article" date="2009" name="Mol. Cell. Proteomics">
        <title>Large-scale proteomics analysis of the human kinome.</title>
        <authorList>
            <person name="Oppermann F.S."/>
            <person name="Gnad F."/>
            <person name="Olsen J.V."/>
            <person name="Hornberger R."/>
            <person name="Greff Z."/>
            <person name="Keri G."/>
            <person name="Mann M."/>
            <person name="Daub H."/>
        </authorList>
    </citation>
    <scope>PHOSPHORYLATION [LARGE SCALE ANALYSIS] AT SER-189; SER-344 AND SER-565</scope>
    <scope>IDENTIFICATION BY MASS SPECTROMETRY [LARGE SCALE ANALYSIS]</scope>
</reference>
<reference key="11">
    <citation type="journal article" date="2009" name="Sci. Signal.">
        <title>Quantitative phosphoproteomic analysis of T cell receptor signaling reveals system-wide modulation of protein-protein interactions.</title>
        <authorList>
            <person name="Mayya V."/>
            <person name="Lundgren D.H."/>
            <person name="Hwang S.-I."/>
            <person name="Rezaul K."/>
            <person name="Wu L."/>
            <person name="Eng J.K."/>
            <person name="Rodionov V."/>
            <person name="Han D.K."/>
        </authorList>
    </citation>
    <scope>PHOSPHORYLATION [LARGE SCALE ANALYSIS] AT SER-779</scope>
    <scope>IDENTIFICATION BY MASS SPECTROMETRY [LARGE SCALE ANALYSIS]</scope>
    <source>
        <tissue>Leukemic T-cell</tissue>
    </source>
</reference>
<reference key="12">
    <citation type="journal article" date="2010" name="Sci. Signal.">
        <title>Quantitative phosphoproteomics reveals widespread full phosphorylation site occupancy during mitosis.</title>
        <authorList>
            <person name="Olsen J.V."/>
            <person name="Vermeulen M."/>
            <person name="Santamaria A."/>
            <person name="Kumar C."/>
            <person name="Miller M.L."/>
            <person name="Jensen L.J."/>
            <person name="Gnad F."/>
            <person name="Cox J."/>
            <person name="Jensen T.S."/>
            <person name="Nigg E.A."/>
            <person name="Brunak S."/>
            <person name="Mann M."/>
        </authorList>
    </citation>
    <scope>PHOSPHORYLATION [LARGE SCALE ANALYSIS] AT SER-189; SER-571; SER-779 AND THR-1097</scope>
    <scope>IDENTIFICATION BY MASS SPECTROMETRY [LARGE SCALE ANALYSIS]</scope>
    <source>
        <tissue>Cervix carcinoma</tissue>
    </source>
</reference>
<reference key="13">
    <citation type="journal article" date="2011" name="BMC Syst. Biol.">
        <title>Initial characterization of the human central proteome.</title>
        <authorList>
            <person name="Burkard T.R."/>
            <person name="Planyavsky M."/>
            <person name="Kaupe I."/>
            <person name="Breitwieser F.P."/>
            <person name="Buerckstuemmer T."/>
            <person name="Bennett K.L."/>
            <person name="Superti-Furga G."/>
            <person name="Colinge J."/>
        </authorList>
    </citation>
    <scope>IDENTIFICATION BY MASS SPECTROMETRY [LARGE SCALE ANALYSIS]</scope>
</reference>
<reference key="14">
    <citation type="journal article" date="2011" name="Sci. Signal.">
        <title>System-wide temporal characterization of the proteome and phosphoproteome of human embryonic stem cell differentiation.</title>
        <authorList>
            <person name="Rigbolt K.T."/>
            <person name="Prokhorova T.A."/>
            <person name="Akimov V."/>
            <person name="Henningsen J."/>
            <person name="Johansen P.T."/>
            <person name="Kratchmarova I."/>
            <person name="Kassem M."/>
            <person name="Mann M."/>
            <person name="Olsen J.V."/>
            <person name="Blagoev B."/>
        </authorList>
    </citation>
    <scope>PHOSPHORYLATION [LARGE SCALE ANALYSIS] AT SER-14; SER-347; SER-348; SER-565 AND SER-571</scope>
    <scope>IDENTIFICATION BY MASS SPECTROMETRY [LARGE SCALE ANALYSIS]</scope>
</reference>
<reference key="15">
    <citation type="journal article" date="2013" name="J. Proteome Res.">
        <title>Toward a comprehensive characterization of a human cancer cell phosphoproteome.</title>
        <authorList>
            <person name="Zhou H."/>
            <person name="Di Palma S."/>
            <person name="Preisinger C."/>
            <person name="Peng M."/>
            <person name="Polat A.N."/>
            <person name="Heck A.J."/>
            <person name="Mohammed S."/>
        </authorList>
    </citation>
    <scope>PHOSPHORYLATION [LARGE SCALE ANALYSIS] AT SER-14; SER-189; SER-341; SER-518; SER-565; SER-571; SER-779; THR-814 AND SER-818</scope>
    <scope>IDENTIFICATION BY MASS SPECTROMETRY [LARGE SCALE ANALYSIS]</scope>
    <source>
        <tissue>Cervix carcinoma</tissue>
        <tissue>Erythroleukemia</tissue>
    </source>
</reference>
<reference key="16">
    <citation type="journal article" date="2014" name="J. Proteomics">
        <title>An enzyme assisted RP-RPLC approach for in-depth analysis of human liver phosphoproteome.</title>
        <authorList>
            <person name="Bian Y."/>
            <person name="Song C."/>
            <person name="Cheng K."/>
            <person name="Dong M."/>
            <person name="Wang F."/>
            <person name="Huang J."/>
            <person name="Sun D."/>
            <person name="Wang L."/>
            <person name="Ye M."/>
            <person name="Zou H."/>
        </authorList>
    </citation>
    <scope>PHOSPHORYLATION [LARGE SCALE ANALYSIS] AT SER-372; SER-518; SER-565; THR-569 AND SER-571</scope>
    <scope>IDENTIFICATION BY MASS SPECTROMETRY [LARGE SCALE ANALYSIS]</scope>
    <source>
        <tissue>Liver</tissue>
    </source>
</reference>
<reference key="17">
    <citation type="journal article" date="2007" name="Nature">
        <title>Patterns of somatic mutation in human cancer genomes.</title>
        <authorList>
            <person name="Greenman C."/>
            <person name="Stephens P."/>
            <person name="Smith R."/>
            <person name="Dalgliesh G.L."/>
            <person name="Hunter C."/>
            <person name="Bignell G."/>
            <person name="Davies H."/>
            <person name="Teague J."/>
            <person name="Butler A."/>
            <person name="Stevens C."/>
            <person name="Edkins S."/>
            <person name="O'Meara S."/>
            <person name="Vastrik I."/>
            <person name="Schmidt E.E."/>
            <person name="Avis T."/>
            <person name="Barthorpe S."/>
            <person name="Bhamra G."/>
            <person name="Buck G."/>
            <person name="Choudhury B."/>
            <person name="Clements J."/>
            <person name="Cole J."/>
            <person name="Dicks E."/>
            <person name="Forbes S."/>
            <person name="Gray K."/>
            <person name="Halliday K."/>
            <person name="Harrison R."/>
            <person name="Hills K."/>
            <person name="Hinton J."/>
            <person name="Jenkinson A."/>
            <person name="Jones D."/>
            <person name="Menzies A."/>
            <person name="Mironenko T."/>
            <person name="Perry J."/>
            <person name="Raine K."/>
            <person name="Richardson D."/>
            <person name="Shepherd R."/>
            <person name="Small A."/>
            <person name="Tofts C."/>
            <person name="Varian J."/>
            <person name="Webb T."/>
            <person name="West S."/>
            <person name="Widaa S."/>
            <person name="Yates A."/>
            <person name="Cahill D.P."/>
            <person name="Louis D.N."/>
            <person name="Goldstraw P."/>
            <person name="Nicholson A.G."/>
            <person name="Brasseur F."/>
            <person name="Looijenga L."/>
            <person name="Weber B.L."/>
            <person name="Chiew Y.-E."/>
            <person name="DeFazio A."/>
            <person name="Greaves M.F."/>
            <person name="Green A.R."/>
            <person name="Campbell P."/>
            <person name="Birney E."/>
            <person name="Easton D.F."/>
            <person name="Chenevix-Trench G."/>
            <person name="Tan M.-H."/>
            <person name="Khoo S.K."/>
            <person name="Teh B.T."/>
            <person name="Yuen S.T."/>
            <person name="Leung S.Y."/>
            <person name="Wooster R."/>
            <person name="Futreal P.A."/>
            <person name="Stratton M.R."/>
        </authorList>
    </citation>
    <scope>VARIANTS [LARGE SCALE ANALYSIS] LYS-405; TYR-552; GLN-604; GLY-658; THR-679; ASN-683 AND ILE-697</scope>
</reference>
<reference key="18">
    <citation type="journal article" date="2017" name="Hum. Genet.">
        <title>Expanding the genetic heterogeneity of intellectual disability.</title>
        <authorList>
            <person name="Anazi S."/>
            <person name="Maddirevula S."/>
            <person name="Salpietro V."/>
            <person name="Asi Y.T."/>
            <person name="Alsahli S."/>
            <person name="Alhashem A."/>
            <person name="Shamseldin H.E."/>
            <person name="AlZahrani F."/>
            <person name="Patel N."/>
            <person name="Ibrahim N."/>
            <person name="Abdulwahab F.M."/>
            <person name="Hashem M."/>
            <person name="Alhashmi N."/>
            <person name="Al Murshedi F."/>
            <person name="Al Kindy A."/>
            <person name="Alshaer A."/>
            <person name="Rumayyan A."/>
            <person name="Al Tala S."/>
            <person name="Kurdi W."/>
            <person name="Alsaman A."/>
            <person name="Alasmari A."/>
            <person name="Banu S."/>
            <person name="Sultan T."/>
            <person name="Saleh M.M."/>
            <person name="Alkuraya H."/>
            <person name="Salih M.A."/>
            <person name="Aldhalaan H."/>
            <person name="Ben-Omran T."/>
            <person name="Al Musafri F."/>
            <person name="Ali R."/>
            <person name="Suleiman J."/>
            <person name="Tabarki B."/>
            <person name="El-Hattab A.W."/>
            <person name="Bupp C."/>
            <person name="Alfadhel M."/>
            <person name="Al Tassan N."/>
            <person name="Monies D."/>
            <person name="Arold S.T."/>
            <person name="Abouelhoda M."/>
            <person name="Lashley T."/>
            <person name="Houlden H."/>
            <person name="Faqeih E."/>
            <person name="Alkuraya F.S."/>
        </authorList>
    </citation>
    <scope>VARIANT 472-GLU--SER-1235 DEL</scope>
</reference>
<reference key="19">
    <citation type="journal article" date="2018" name="Hum. Genet.">
        <title>Correction to: Expanding the genetic heterogeneity of intellectual disability.</title>
        <authorList>
            <person name="Anazi S."/>
            <person name="Maddirevula S."/>
            <person name="Salpietro V."/>
            <person name="Asi Y.T."/>
            <person name="Alsahli S."/>
            <person name="Alhashem A."/>
            <person name="Shamseldin H.E."/>
            <person name="AlZahrani F."/>
            <person name="Patel N."/>
            <person name="Ibrahim N."/>
            <person name="Abdulwahab F.M."/>
            <person name="Hashem M."/>
            <person name="Alhashmi N."/>
            <person name="Al Murshedi F."/>
            <person name="Al Kindy A."/>
            <person name="Alshaer A."/>
            <person name="Rumayyan A."/>
            <person name="Al Tala S."/>
            <person name="Kurdi W."/>
            <person name="Alsaman A."/>
            <person name="Alasmari A."/>
            <person name="Banu S."/>
            <person name="Sultan T."/>
            <person name="Saleh M.M."/>
            <person name="Alkuraya H."/>
            <person name="Salih M.A."/>
            <person name="Aldhalaan H."/>
            <person name="Ben-Omran T."/>
            <person name="Al Musafri F."/>
            <person name="Ali R."/>
            <person name="Suleiman J."/>
            <person name="Tabarki B."/>
            <person name="El-Hattab A.W."/>
            <person name="Bupp C."/>
            <person name="Alfadhel M."/>
            <person name="Al Tassan N."/>
            <person name="Monies D."/>
            <person name="Arold S.T."/>
            <person name="Abouelhoda M."/>
            <person name="Lashley T."/>
            <person name="Houlden H."/>
            <person name="Faqeih E."/>
            <person name="Alkuraya F.S."/>
        </authorList>
    </citation>
    <scope>ERRATUM OF PUBMED:28940097</scope>
</reference>
<sequence>MSFFNFRKIFKLGSEKKKKQYEHVKRDLNPEDFWEIIGELGDGAFGKVYKAQNKETSVLAAAKVIDTKSEEELEDYMVEIDILASCDHPNIVKLLDAFYYENNLWILIEFCAGGAVDAVMLELERPLTESQIQVVCKQTLDALNYLHDNKIIHRDLKAGNILFTLDGDIKLADFGVSAKNTRTIQRRDSFIGTPYWMAPEVVMCETSKDRPYDYKADVWSLGITLIEMAEIEPPHHELNPMRVLLKIAKSEPPTLAQPSRWSSNFKDFLKKCLEKNVDARWTTSQLLQHPFVTVDSNKPIRELIAEAKAEVTEEVEDGKEEDEEEETENSLPIPASKRASSDLSIASSEEDKLSQNACILESVSEKTERSNSEDKLNSKILNEKPTTDEPEKAVEDINEHITDAQLEAMTELHDRTAVIKENEREKRPKLENLPDTEDQETVDINSVSEGKENNIMITLETNIEHNLKSEEEKDQEKQQMFENKLIKSEEIKDTILQTVDLVSQETGEKEANIQAVDSEVGLTKEDTQEKLGEDDKTQKDVISNTSDVIGTCEAADVAQKVDEDSAEDTQSNDGKEVVEVGQKLINKPMVGPEAGGTKEVPIKEIVEMNEIEEGKNKEQAINSSENIMDINEEPGTTEGEEITESSSTEEMEVRSVVADTDQKALGSEVQDASKVTTQIDKEKKEIPVSIKKEPEVTVVSQPTEPQPVLIPSININSDSGENKEEIGSLSKTETILPPESENPKENDNDSGTGSTADTSSIDLNLSISSFLSKTKDSGSISLQETRRQKKTLKKTRKFIVDGVEVSVTTSKIVTDSDSKTEELRFLRRQELRELRFLQKEEQRAQQQLNSKLQQQREQIFRRFEQEMMSKKRQYDQEIENLEKQQKQTIERLEQEHTNRLRDEAKRIKGEQEKELSKFQNMLKNRKKEVINEVEKAPKELRKELMKRRKEELAQSQHAQEQEFVQKQQQELDGSLKKIIQQQKAELANIERECLNNKQQLMRAREAAIWELEERHLQEKHQLLKQQLKDQYFMQRHQLLKRHEKETEQMQRYNQRLIEELKNRQTQERARLPKIQRSEAKTRMAMFKKSLRINSTATPDQDRDKIKQFAAQEEKRQKNERMAQHQKHENQMRDLQLQCEANVRELHQLQNEKCHLLVEHETQKLKELDEEHSQELKEWREKLRPRKKTLEEEFARKLQEQEVFFKMTGESECLNPSTQSRISKFYPIPSLHSTGS</sequence>
<gene>
    <name type="primary">SLK</name>
    <name type="synonym">KIAA0204</name>
    <name type="synonym">STK2</name>
</gene>
<comment type="function">
    <text evidence="1">Mediates apoptosis and actin stress fiber dissolution.</text>
</comment>
<comment type="catalytic activity">
    <reaction>
        <text>L-seryl-[protein] + ATP = O-phospho-L-seryl-[protein] + ADP + H(+)</text>
        <dbReference type="Rhea" id="RHEA:17989"/>
        <dbReference type="Rhea" id="RHEA-COMP:9863"/>
        <dbReference type="Rhea" id="RHEA-COMP:11604"/>
        <dbReference type="ChEBI" id="CHEBI:15378"/>
        <dbReference type="ChEBI" id="CHEBI:29999"/>
        <dbReference type="ChEBI" id="CHEBI:30616"/>
        <dbReference type="ChEBI" id="CHEBI:83421"/>
        <dbReference type="ChEBI" id="CHEBI:456216"/>
        <dbReference type="EC" id="2.7.11.1"/>
    </reaction>
</comment>
<comment type="catalytic activity">
    <reaction>
        <text>L-threonyl-[protein] + ATP = O-phospho-L-threonyl-[protein] + ADP + H(+)</text>
        <dbReference type="Rhea" id="RHEA:46608"/>
        <dbReference type="Rhea" id="RHEA-COMP:11060"/>
        <dbReference type="Rhea" id="RHEA-COMP:11605"/>
        <dbReference type="ChEBI" id="CHEBI:15378"/>
        <dbReference type="ChEBI" id="CHEBI:30013"/>
        <dbReference type="ChEBI" id="CHEBI:30616"/>
        <dbReference type="ChEBI" id="CHEBI:61977"/>
        <dbReference type="ChEBI" id="CHEBI:456216"/>
        <dbReference type="EC" id="2.7.11.1"/>
    </reaction>
</comment>
<comment type="interaction">
    <interactant intactId="EBI-1022272">
        <id>Q9H2G2</id>
    </interactant>
    <interactant intactId="EBI-1022272">
        <id>Q9H2G2</id>
        <label>SLK</label>
    </interactant>
    <organismsDiffer>false</organismsDiffer>
    <experiments>3</experiments>
</comment>
<comment type="subcellular location">
    <subcellularLocation>
        <location evidence="1">Cytoplasm</location>
    </subcellularLocation>
</comment>
<comment type="alternative products">
    <event type="alternative splicing"/>
    <isoform>
        <id>Q9H2G2-1</id>
        <name>1</name>
        <sequence type="displayed"/>
    </isoform>
    <isoform>
        <id>Q9H2G2-2</id>
        <name>2</name>
        <sequence type="described" ref="VSP_018100"/>
    </isoform>
</comment>
<comment type="tissue specificity">
    <text evidence="9">Ubiquitously expressed. Highest expression is found in heart and in skeletal muscle.</text>
</comment>
<comment type="PTM">
    <text>Proteolytically cleaved by caspase-3.</text>
</comment>
<comment type="PTM">
    <text evidence="9">Autophosphorylated.</text>
</comment>
<comment type="similarity">
    <text evidence="15">Belongs to the protein kinase superfamily. STE Ser/Thr protein kinase family. STE20 subfamily.</text>
</comment>
<comment type="sequence caution" evidence="15">
    <conflict type="miscellaneous discrepancy">
        <sequence resource="EMBL-CDS" id="AAH47762"/>
    </conflict>
    <text>Contaminating sequence. Potential poly-A sequence starting in position 611.</text>
</comment>
<comment type="sequence caution" evidence="15">
    <conflict type="miscellaneous discrepancy">
        <sequence resource="EMBL-CDS" id="AAH47885"/>
    </conflict>
    <text>Contaminating sequence. Potential poly-A sequence starting in position 422.</text>
</comment>
<comment type="sequence caution" evidence="15">
    <conflict type="miscellaneous discrepancy">
        <sequence resource="EMBL-CDS" id="AAH64804"/>
    </conflict>
    <text>Contaminating sequence. Potential poly-A sequence starting in position 614.</text>
</comment>
<comment type="sequence caution" evidence="15">
    <conflict type="frameshift">
        <sequence resource="EMBL-CDS" id="BAA13195"/>
    </conflict>
</comment>
<dbReference type="EC" id="2.7.11.1"/>
<dbReference type="EMBL" id="AB002804">
    <property type="protein sequence ID" value="BAA19655.1"/>
    <property type="molecule type" value="mRNA"/>
</dbReference>
<dbReference type="EMBL" id="AF273048">
    <property type="protein sequence ID" value="AAG34908.1"/>
    <property type="molecule type" value="mRNA"/>
</dbReference>
<dbReference type="EMBL" id="D86959">
    <property type="protein sequence ID" value="BAA13195.2"/>
    <property type="status" value="ALT_SEQ"/>
    <property type="molecule type" value="mRNA"/>
</dbReference>
<dbReference type="EMBL" id="AL360170">
    <property type="status" value="NOT_ANNOTATED_CDS"/>
    <property type="molecule type" value="Genomic_DNA"/>
</dbReference>
<dbReference type="EMBL" id="AL138761">
    <property type="status" value="NOT_ANNOTATED_CDS"/>
    <property type="molecule type" value="Genomic_DNA"/>
</dbReference>
<dbReference type="EMBL" id="CH471066">
    <property type="protein sequence ID" value="EAW49615.1"/>
    <property type="molecule type" value="Genomic_DNA"/>
</dbReference>
<dbReference type="EMBL" id="CH471066">
    <property type="protein sequence ID" value="EAW49616.1"/>
    <property type="molecule type" value="Genomic_DNA"/>
</dbReference>
<dbReference type="EMBL" id="CH471066">
    <property type="protein sequence ID" value="EAW49617.1"/>
    <property type="molecule type" value="Genomic_DNA"/>
</dbReference>
<dbReference type="EMBL" id="CH471066">
    <property type="protein sequence ID" value="EAW49618.1"/>
    <property type="molecule type" value="Genomic_DNA"/>
</dbReference>
<dbReference type="EMBL" id="BC047762">
    <property type="protein sequence ID" value="AAH47762.1"/>
    <property type="status" value="ALT_SEQ"/>
    <property type="molecule type" value="mRNA"/>
</dbReference>
<dbReference type="EMBL" id="BC047885">
    <property type="protein sequence ID" value="AAH47885.1"/>
    <property type="status" value="ALT_SEQ"/>
    <property type="molecule type" value="mRNA"/>
</dbReference>
<dbReference type="EMBL" id="BC064804">
    <property type="protein sequence ID" value="AAH64804.1"/>
    <property type="status" value="ALT_SEQ"/>
    <property type="molecule type" value="mRNA"/>
</dbReference>
<dbReference type="EMBL" id="BC111565">
    <property type="protein sequence ID" value="AAI11566.1"/>
    <property type="molecule type" value="mRNA"/>
</dbReference>
<dbReference type="CCDS" id="CCDS7553.1">
    <molecule id="Q9H2G2-1"/>
</dbReference>
<dbReference type="CCDS" id="CCDS76334.1">
    <molecule id="Q9H2G2-2"/>
</dbReference>
<dbReference type="RefSeq" id="NP_001291672.1">
    <molecule id="Q9H2G2-2"/>
    <property type="nucleotide sequence ID" value="NM_001304743.2"/>
</dbReference>
<dbReference type="RefSeq" id="NP_055535.2">
    <molecule id="Q9H2G2-1"/>
    <property type="nucleotide sequence ID" value="NM_014720.3"/>
</dbReference>
<dbReference type="PDB" id="2J51">
    <property type="method" value="X-ray"/>
    <property type="resolution" value="2.10 A"/>
    <property type="chains" value="A=19-320"/>
</dbReference>
<dbReference type="PDB" id="2JFL">
    <property type="method" value="X-ray"/>
    <property type="resolution" value="2.20 A"/>
    <property type="chains" value="A=19-320"/>
</dbReference>
<dbReference type="PDB" id="2JFM">
    <property type="method" value="X-ray"/>
    <property type="resolution" value="2.85 A"/>
    <property type="chains" value="A=19-320"/>
</dbReference>
<dbReference type="PDB" id="2UV2">
    <property type="method" value="X-ray"/>
    <property type="resolution" value="2.30 A"/>
    <property type="chains" value="A=19-320"/>
</dbReference>
<dbReference type="PDB" id="4USF">
    <property type="method" value="X-ray"/>
    <property type="resolution" value="1.75 A"/>
    <property type="chains" value="A/B=19-320"/>
</dbReference>
<dbReference type="PDB" id="6HVD">
    <property type="method" value="X-ray"/>
    <property type="resolution" value="1.63 A"/>
    <property type="chains" value="A=19-320"/>
</dbReference>
<dbReference type="PDB" id="8BEM">
    <property type="method" value="X-ray"/>
    <property type="resolution" value="2.60 A"/>
    <property type="chains" value="A/B/D/G=19-319"/>
</dbReference>
<dbReference type="PDBsum" id="2J51"/>
<dbReference type="PDBsum" id="2JFL"/>
<dbReference type="PDBsum" id="2JFM"/>
<dbReference type="PDBsum" id="2UV2"/>
<dbReference type="PDBsum" id="4USF"/>
<dbReference type="PDBsum" id="6HVD"/>
<dbReference type="PDBsum" id="8BEM"/>
<dbReference type="PCDDB" id="Q9H2G2"/>
<dbReference type="SMR" id="Q9H2G2"/>
<dbReference type="BioGRID" id="115096">
    <property type="interactions" value="188"/>
</dbReference>
<dbReference type="FunCoup" id="Q9H2G2">
    <property type="interactions" value="2503"/>
</dbReference>
<dbReference type="IntAct" id="Q9H2G2">
    <property type="interactions" value="77"/>
</dbReference>
<dbReference type="MINT" id="Q9H2G2"/>
<dbReference type="STRING" id="9606.ENSP00000358770"/>
<dbReference type="BindingDB" id="Q9H2G2"/>
<dbReference type="ChEMBL" id="CHEMBL4202"/>
<dbReference type="DrugBank" id="DB07853">
    <property type="generic name" value="2-[4-[4-[(5-cyclopropyl-1H-pyrazol-3-yl)amino]quinazolin-2-yl]iminocyclohexa-2,5-dien-1-yl]acetonitrile"/>
</dbReference>
<dbReference type="DrugBank" id="DB06616">
    <property type="generic name" value="Bosutinib"/>
</dbReference>
<dbReference type="DrugBank" id="DB12010">
    <property type="generic name" value="Fostamatinib"/>
</dbReference>
<dbReference type="DrugBank" id="DB07664">
    <property type="generic name" value="K-00546"/>
</dbReference>
<dbReference type="DrugCentral" id="Q9H2G2"/>
<dbReference type="GuidetoPHARMACOLOGY" id="2200"/>
<dbReference type="GlyGen" id="Q9H2G2">
    <property type="glycosylation" value="1 site, 1 O-linked glycan (1 site)"/>
</dbReference>
<dbReference type="iPTMnet" id="Q9H2G2"/>
<dbReference type="MetOSite" id="Q9H2G2"/>
<dbReference type="PhosphoSitePlus" id="Q9H2G2"/>
<dbReference type="SwissPalm" id="Q9H2G2"/>
<dbReference type="BioMuta" id="SLK"/>
<dbReference type="DMDM" id="74762732"/>
<dbReference type="CPTAC" id="CPTAC-2845"/>
<dbReference type="CPTAC" id="CPTAC-2948"/>
<dbReference type="jPOST" id="Q9H2G2"/>
<dbReference type="MassIVE" id="Q9H2G2"/>
<dbReference type="PaxDb" id="9606-ENSP00000358770"/>
<dbReference type="PeptideAtlas" id="Q9H2G2"/>
<dbReference type="ProteomicsDB" id="80544">
    <molecule id="Q9H2G2-1"/>
</dbReference>
<dbReference type="ProteomicsDB" id="80545">
    <molecule id="Q9H2G2-2"/>
</dbReference>
<dbReference type="Pumba" id="Q9H2G2"/>
<dbReference type="Antibodypedia" id="18194">
    <property type="antibodies" value="291 antibodies from 34 providers"/>
</dbReference>
<dbReference type="DNASU" id="9748"/>
<dbReference type="Ensembl" id="ENST00000335753.8">
    <molecule id="Q9H2G2-2"/>
    <property type="protein sequence ID" value="ENSP00000336824.4"/>
    <property type="gene ID" value="ENSG00000065613.15"/>
</dbReference>
<dbReference type="Ensembl" id="ENST00000369755.4">
    <molecule id="Q9H2G2-1"/>
    <property type="protein sequence ID" value="ENSP00000358770.3"/>
    <property type="gene ID" value="ENSG00000065613.15"/>
</dbReference>
<dbReference type="GeneID" id="9748"/>
<dbReference type="KEGG" id="hsa:9748"/>
<dbReference type="MANE-Select" id="ENST00000369755.4">
    <property type="protein sequence ID" value="ENSP00000358770.3"/>
    <property type="RefSeq nucleotide sequence ID" value="NM_014720.4"/>
    <property type="RefSeq protein sequence ID" value="NP_055535.2"/>
</dbReference>
<dbReference type="UCSC" id="uc001kxo.2">
    <molecule id="Q9H2G2-1"/>
    <property type="organism name" value="human"/>
</dbReference>
<dbReference type="AGR" id="HGNC:11088"/>
<dbReference type="CTD" id="9748"/>
<dbReference type="DisGeNET" id="9748"/>
<dbReference type="GeneCards" id="SLK"/>
<dbReference type="HGNC" id="HGNC:11088">
    <property type="gene designation" value="SLK"/>
</dbReference>
<dbReference type="HPA" id="ENSG00000065613">
    <property type="expression patterns" value="Low tissue specificity"/>
</dbReference>
<dbReference type="MalaCards" id="SLK"/>
<dbReference type="MIM" id="616563">
    <property type="type" value="gene"/>
</dbReference>
<dbReference type="neXtProt" id="NX_Q9H2G2"/>
<dbReference type="OpenTargets" id="ENSG00000065613"/>
<dbReference type="PharmGKB" id="PA35941"/>
<dbReference type="VEuPathDB" id="HostDB:ENSG00000065613"/>
<dbReference type="eggNOG" id="KOG0579">
    <property type="taxonomic scope" value="Eukaryota"/>
</dbReference>
<dbReference type="GeneTree" id="ENSGT00940000156184"/>
<dbReference type="HOGENOM" id="CLU_001965_3_0_1"/>
<dbReference type="InParanoid" id="Q9H2G2"/>
<dbReference type="OMA" id="DESCADS"/>
<dbReference type="OrthoDB" id="10027016at2759"/>
<dbReference type="PAN-GO" id="Q9H2G2">
    <property type="GO annotations" value="5 GO annotations based on evolutionary models"/>
</dbReference>
<dbReference type="PhylomeDB" id="Q9H2G2"/>
<dbReference type="TreeFam" id="TF351445"/>
<dbReference type="PathwayCommons" id="Q9H2G2"/>
<dbReference type="Reactome" id="R-HSA-8980692">
    <property type="pathway name" value="RHOA GTPase cycle"/>
</dbReference>
<dbReference type="Reactome" id="R-HSA-9013026">
    <property type="pathway name" value="RHOB GTPase cycle"/>
</dbReference>
<dbReference type="Reactome" id="R-HSA-9013106">
    <property type="pathway name" value="RHOC GTPase cycle"/>
</dbReference>
<dbReference type="SignaLink" id="Q9H2G2"/>
<dbReference type="SIGNOR" id="Q9H2G2"/>
<dbReference type="BioGRID-ORCS" id="9748">
    <property type="hits" value="24 hits in 1189 CRISPR screens"/>
</dbReference>
<dbReference type="CD-CODE" id="FB4E32DD">
    <property type="entry name" value="Presynaptic clusters and postsynaptic densities"/>
</dbReference>
<dbReference type="ChiTaRS" id="SLK">
    <property type="organism name" value="human"/>
</dbReference>
<dbReference type="EvolutionaryTrace" id="Q9H2G2"/>
<dbReference type="GeneWiki" id="SLK_(gene)"/>
<dbReference type="GenomeRNAi" id="9748"/>
<dbReference type="Pharos" id="Q9H2G2">
    <property type="development level" value="Tchem"/>
</dbReference>
<dbReference type="PRO" id="PR:Q9H2G2"/>
<dbReference type="Proteomes" id="UP000005640">
    <property type="component" value="Chromosome 10"/>
</dbReference>
<dbReference type="RNAct" id="Q9H2G2">
    <property type="molecule type" value="protein"/>
</dbReference>
<dbReference type="Bgee" id="ENSG00000065613">
    <property type="expression patterns" value="Expressed in esophagus squamous epithelium and 213 other cell types or tissues"/>
</dbReference>
<dbReference type="ExpressionAtlas" id="Q9H2G2">
    <property type="expression patterns" value="baseline and differential"/>
</dbReference>
<dbReference type="GO" id="GO:0031252">
    <property type="term" value="C:cell leading edge"/>
    <property type="evidence" value="ECO:0000250"/>
    <property type="project" value="UniProtKB"/>
</dbReference>
<dbReference type="GO" id="GO:0005737">
    <property type="term" value="C:cytoplasm"/>
    <property type="evidence" value="ECO:0000314"/>
    <property type="project" value="UniProtKB"/>
</dbReference>
<dbReference type="GO" id="GO:0005829">
    <property type="term" value="C:cytosol"/>
    <property type="evidence" value="ECO:0000304"/>
    <property type="project" value="Reactome"/>
</dbReference>
<dbReference type="GO" id="GO:0070062">
    <property type="term" value="C:extracellular exosome"/>
    <property type="evidence" value="ECO:0007005"/>
    <property type="project" value="UniProtKB"/>
</dbReference>
<dbReference type="GO" id="GO:0048471">
    <property type="term" value="C:perinuclear region of cytoplasm"/>
    <property type="evidence" value="ECO:0000314"/>
    <property type="project" value="UniProtKB"/>
</dbReference>
<dbReference type="GO" id="GO:0005524">
    <property type="term" value="F:ATP binding"/>
    <property type="evidence" value="ECO:0007669"/>
    <property type="project" value="UniProtKB-KW"/>
</dbReference>
<dbReference type="GO" id="GO:0045296">
    <property type="term" value="F:cadherin binding"/>
    <property type="evidence" value="ECO:0007005"/>
    <property type="project" value="BHF-UCL"/>
</dbReference>
<dbReference type="GO" id="GO:0042802">
    <property type="term" value="F:identical protein binding"/>
    <property type="evidence" value="ECO:0000353"/>
    <property type="project" value="IntAct"/>
</dbReference>
<dbReference type="GO" id="GO:0042803">
    <property type="term" value="F:protein homodimerization activity"/>
    <property type="evidence" value="ECO:0000314"/>
    <property type="project" value="UniProtKB"/>
</dbReference>
<dbReference type="GO" id="GO:0106310">
    <property type="term" value="F:protein serine kinase activity"/>
    <property type="evidence" value="ECO:0007669"/>
    <property type="project" value="RHEA"/>
</dbReference>
<dbReference type="GO" id="GO:0004674">
    <property type="term" value="F:protein serine/threonine kinase activity"/>
    <property type="evidence" value="ECO:0000314"/>
    <property type="project" value="UniProtKB"/>
</dbReference>
<dbReference type="GO" id="GO:0006915">
    <property type="term" value="P:apoptotic process"/>
    <property type="evidence" value="ECO:0007669"/>
    <property type="project" value="UniProtKB-KW"/>
</dbReference>
<dbReference type="GO" id="GO:0031122">
    <property type="term" value="P:cytoplasmic microtubule organization"/>
    <property type="evidence" value="ECO:0000315"/>
    <property type="project" value="UniProtKB"/>
</dbReference>
<dbReference type="GO" id="GO:0035556">
    <property type="term" value="P:intracellular signal transduction"/>
    <property type="evidence" value="ECO:0000318"/>
    <property type="project" value="GO_Central"/>
</dbReference>
<dbReference type="GO" id="GO:0046777">
    <property type="term" value="P:protein autophosphorylation"/>
    <property type="evidence" value="ECO:0000314"/>
    <property type="project" value="UniProtKB"/>
</dbReference>
<dbReference type="GO" id="GO:0042981">
    <property type="term" value="P:regulation of apoptotic process"/>
    <property type="evidence" value="ECO:0000314"/>
    <property type="project" value="UniProtKB"/>
</dbReference>
<dbReference type="GO" id="GO:0030334">
    <property type="term" value="P:regulation of cell migration"/>
    <property type="evidence" value="ECO:0000315"/>
    <property type="project" value="UniProtKB"/>
</dbReference>
<dbReference type="GO" id="GO:0051893">
    <property type="term" value="P:regulation of focal adhesion assembly"/>
    <property type="evidence" value="ECO:0000314"/>
    <property type="project" value="UniProtKB"/>
</dbReference>
<dbReference type="CDD" id="cd06643">
    <property type="entry name" value="STKc_SLK"/>
    <property type="match status" value="1"/>
</dbReference>
<dbReference type="FunFam" id="1.10.510.10:FF:000081">
    <property type="entry name" value="STE20-like serine/threonine-protein kinase"/>
    <property type="match status" value="1"/>
</dbReference>
<dbReference type="FunFam" id="3.30.200.20:FF:000120">
    <property type="entry name" value="STE20-like serine/threonine-protein kinase"/>
    <property type="match status" value="1"/>
</dbReference>
<dbReference type="Gene3D" id="3.30.200.20">
    <property type="entry name" value="Phosphorylase Kinase, domain 1"/>
    <property type="match status" value="1"/>
</dbReference>
<dbReference type="Gene3D" id="1.10.510.10">
    <property type="entry name" value="Transferase(Phosphotransferase) domain 1"/>
    <property type="match status" value="1"/>
</dbReference>
<dbReference type="InterPro" id="IPR011009">
    <property type="entry name" value="Kinase-like_dom_sf"/>
</dbReference>
<dbReference type="InterPro" id="IPR022165">
    <property type="entry name" value="PKK"/>
</dbReference>
<dbReference type="InterPro" id="IPR000719">
    <property type="entry name" value="Prot_kinase_dom"/>
</dbReference>
<dbReference type="InterPro" id="IPR017441">
    <property type="entry name" value="Protein_kinase_ATP_BS"/>
</dbReference>
<dbReference type="InterPro" id="IPR008271">
    <property type="entry name" value="Ser/Thr_kinase_AS"/>
</dbReference>
<dbReference type="InterPro" id="IPR051585">
    <property type="entry name" value="STE20_Ser/Thr_Kinases"/>
</dbReference>
<dbReference type="InterPro" id="IPR001943">
    <property type="entry name" value="UVR_dom"/>
</dbReference>
<dbReference type="PANTHER" id="PTHR46538:SF1">
    <property type="entry name" value="NON-SPECIFIC SERINE_THREONINE PROTEIN KINASE"/>
    <property type="match status" value="1"/>
</dbReference>
<dbReference type="PANTHER" id="PTHR46538">
    <property type="entry name" value="PROTEIN KINASE DOMAIN-CONTAINING PROTEIN"/>
    <property type="match status" value="1"/>
</dbReference>
<dbReference type="Pfam" id="PF00069">
    <property type="entry name" value="Pkinase"/>
    <property type="match status" value="1"/>
</dbReference>
<dbReference type="Pfam" id="PF12474">
    <property type="entry name" value="PKK"/>
    <property type="match status" value="2"/>
</dbReference>
<dbReference type="SMART" id="SM00220">
    <property type="entry name" value="S_TKc"/>
    <property type="match status" value="1"/>
</dbReference>
<dbReference type="SUPFAM" id="SSF56112">
    <property type="entry name" value="Protein kinase-like (PK-like)"/>
    <property type="match status" value="1"/>
</dbReference>
<dbReference type="PROSITE" id="PS00107">
    <property type="entry name" value="PROTEIN_KINASE_ATP"/>
    <property type="match status" value="1"/>
</dbReference>
<dbReference type="PROSITE" id="PS50011">
    <property type="entry name" value="PROTEIN_KINASE_DOM"/>
    <property type="match status" value="1"/>
</dbReference>
<dbReference type="PROSITE" id="PS00108">
    <property type="entry name" value="PROTEIN_KINASE_ST"/>
    <property type="match status" value="1"/>
</dbReference>
<dbReference type="PROSITE" id="PS50151">
    <property type="entry name" value="UVR"/>
    <property type="match status" value="1"/>
</dbReference>
<accession>Q9H2G2</accession>
<accession>D3DRA0</accession>
<accession>D3DRA1</accession>
<accession>O00211</accession>
<accession>Q6P1Z4</accession>
<accession>Q86WU7</accession>
<accession>Q86WW1</accession>
<accession>Q92603</accession>
<accession>Q9NQL0</accession>
<accession>Q9NQL1</accession>
<organism>
    <name type="scientific">Homo sapiens</name>
    <name type="common">Human</name>
    <dbReference type="NCBI Taxonomy" id="9606"/>
    <lineage>
        <taxon>Eukaryota</taxon>
        <taxon>Metazoa</taxon>
        <taxon>Chordata</taxon>
        <taxon>Craniata</taxon>
        <taxon>Vertebrata</taxon>
        <taxon>Euteleostomi</taxon>
        <taxon>Mammalia</taxon>
        <taxon>Eutheria</taxon>
        <taxon>Euarchontoglires</taxon>
        <taxon>Primates</taxon>
        <taxon>Haplorrhini</taxon>
        <taxon>Catarrhini</taxon>
        <taxon>Hominidae</taxon>
        <taxon>Homo</taxon>
    </lineage>
</organism>